<dbReference type="EMBL" id="CP001164">
    <property type="protein sequence ID" value="ACI36082.1"/>
    <property type="molecule type" value="Genomic_DNA"/>
</dbReference>
<dbReference type="RefSeq" id="WP_000219686.1">
    <property type="nucleotide sequence ID" value="NC_011353.1"/>
</dbReference>
<dbReference type="SMR" id="B5YQ77"/>
<dbReference type="KEGG" id="ecf:ECH74115_2508"/>
<dbReference type="HOGENOM" id="CLU_049702_0_0_6"/>
<dbReference type="HAMAP" id="MF_01232">
    <property type="entry name" value="UPF0229"/>
    <property type="match status" value="1"/>
</dbReference>
<dbReference type="InterPro" id="IPR006698">
    <property type="entry name" value="UPF0229"/>
</dbReference>
<dbReference type="NCBIfam" id="NF003707">
    <property type="entry name" value="PRK05325.1-2"/>
    <property type="match status" value="1"/>
</dbReference>
<dbReference type="NCBIfam" id="NF003708">
    <property type="entry name" value="PRK05325.1-3"/>
    <property type="match status" value="1"/>
</dbReference>
<dbReference type="PANTHER" id="PTHR30510">
    <property type="entry name" value="UPF0229 PROTEIN YEAH"/>
    <property type="match status" value="1"/>
</dbReference>
<dbReference type="PANTHER" id="PTHR30510:SF2">
    <property type="entry name" value="UPF0229 PROTEIN YEAH"/>
    <property type="match status" value="1"/>
</dbReference>
<dbReference type="Pfam" id="PF04285">
    <property type="entry name" value="DUF444"/>
    <property type="match status" value="1"/>
</dbReference>
<organism>
    <name type="scientific">Escherichia coli O157:H7 (strain EC4115 / EHEC)</name>
    <dbReference type="NCBI Taxonomy" id="444450"/>
    <lineage>
        <taxon>Bacteria</taxon>
        <taxon>Pseudomonadati</taxon>
        <taxon>Pseudomonadota</taxon>
        <taxon>Gammaproteobacteria</taxon>
        <taxon>Enterobacterales</taxon>
        <taxon>Enterobacteriaceae</taxon>
        <taxon>Escherichia</taxon>
    </lineage>
</organism>
<comment type="similarity">
    <text evidence="1">Belongs to the UPF0229 family.</text>
</comment>
<accession>B5YQ77</accession>
<protein>
    <recommendedName>
        <fullName evidence="1">UPF0229 protein YeaH</fullName>
    </recommendedName>
</protein>
<sequence>MTWFIDRRLNGKNKSMVNRQRFLRRYKAQIKQSISEAINKRSVTDVDSGESVSIPTEDISEPMFHQGRGGLRHRVHPGNDHFVQNDRIERPQGGGGGSGSGQGQASQDGEGQDEFVFQISKDEYLDLLFEDLALPNLKQNQQRQLTEYKTHRAGYTANGVPANISVVRSLQNSLARRTAMTAGKRRELHALEENLAIISNSEPAQLLEEERLRKEIAELRAKIERVPFIDTFDLRYKNYEKRPDPSSQAVMFCLMDVSGSMDQSTKDMAKRFYILLYLFLSRTYKNVEVVYIRHHTQAKEVDEHEFFYSQETGGTIVSSALKLMDEVVKERYNPAQWNIYAAQASDGDNWADDSPLCHEILAKKLLPVVRYYSYIEITRRAHQTLWREYEHLQSTFDNFAMQHIRDQDDIYPVFRELFHKQNATAKD</sequence>
<evidence type="ECO:0000255" key="1">
    <source>
        <dbReference type="HAMAP-Rule" id="MF_01232"/>
    </source>
</evidence>
<evidence type="ECO:0000256" key="2">
    <source>
        <dbReference type="SAM" id="MobiDB-lite"/>
    </source>
</evidence>
<reference key="1">
    <citation type="journal article" date="2011" name="Proc. Natl. Acad. Sci. U.S.A.">
        <title>Genomic anatomy of Escherichia coli O157:H7 outbreaks.</title>
        <authorList>
            <person name="Eppinger M."/>
            <person name="Mammel M.K."/>
            <person name="Leclerc J.E."/>
            <person name="Ravel J."/>
            <person name="Cebula T.A."/>
        </authorList>
    </citation>
    <scope>NUCLEOTIDE SEQUENCE [LARGE SCALE GENOMIC DNA]</scope>
    <source>
        <strain>EC4115 / EHEC</strain>
    </source>
</reference>
<feature type="chain" id="PRO_1000139640" description="UPF0229 protein YeaH">
    <location>
        <begin position="1"/>
        <end position="427"/>
    </location>
</feature>
<feature type="region of interest" description="Disordered" evidence="2">
    <location>
        <begin position="79"/>
        <end position="110"/>
    </location>
</feature>
<feature type="compositionally biased region" description="Basic and acidic residues" evidence="2">
    <location>
        <begin position="79"/>
        <end position="90"/>
    </location>
</feature>
<feature type="compositionally biased region" description="Gly residues" evidence="2">
    <location>
        <begin position="92"/>
        <end position="102"/>
    </location>
</feature>
<gene>
    <name evidence="1" type="primary">yeaH</name>
    <name type="ordered locus">ECH74115_2508</name>
</gene>
<name>YEAH_ECO5E</name>
<proteinExistence type="inferred from homology"/>